<accession>O13974</accession>
<sequence length="329" mass="35668">MSSLRLRLKYENQSAVETVEANATVGSFLDLVAAKFSLPRNSIALKFGFPPQDIPLVNSDVPLSTLVSSGQQILVLKNAATSFSTNEPAKPPIPNAATKPTFPPQTEISNPPAVSHQSKNTSQDPPYVSTPIGDIALRVMPDDNSCLFRALSKPLGFSPYELREIVANQVLSNPDIYSTAILGKPSIEYASWIRKETSWGGYIELSILSSHFGVEICSVDVKTGRVDSYNPQPATGQRTYIVYSGIHYDLAALAAVLWDTDVDVVLFDASDVTITPYVQQLASLLKNMHYYTDTASFSIRCTICGTGLVGEKDATAHALATGHTQFGEY</sequence>
<dbReference type="EC" id="3.4.19.12" evidence="2"/>
<dbReference type="EMBL" id="CU329670">
    <property type="protein sequence ID" value="CAB11271.1"/>
    <property type="molecule type" value="Genomic_DNA"/>
</dbReference>
<dbReference type="PIR" id="T38355">
    <property type="entry name" value="T38355"/>
</dbReference>
<dbReference type="RefSeq" id="NP_594039.1">
    <property type="nucleotide sequence ID" value="NM_001019464.2"/>
</dbReference>
<dbReference type="SMR" id="O13974"/>
<dbReference type="BioGRID" id="279103">
    <property type="interactions" value="19"/>
</dbReference>
<dbReference type="FunCoup" id="O13974">
    <property type="interactions" value="240"/>
</dbReference>
<dbReference type="IntAct" id="O13974">
    <property type="interactions" value="2"/>
</dbReference>
<dbReference type="STRING" id="284812.O13974"/>
<dbReference type="MEROPS" id="C85.007"/>
<dbReference type="iPTMnet" id="O13974"/>
<dbReference type="PaxDb" id="4896-SPAC24C9.14.1"/>
<dbReference type="EnsemblFungi" id="SPAC24C9.14.1">
    <property type="protein sequence ID" value="SPAC24C9.14.1:pep"/>
    <property type="gene ID" value="SPAC24C9.14"/>
</dbReference>
<dbReference type="PomBase" id="SPAC24C9.14">
    <property type="gene designation" value="otu1"/>
</dbReference>
<dbReference type="VEuPathDB" id="FungiDB:SPAC24C9.14"/>
<dbReference type="eggNOG" id="KOG3288">
    <property type="taxonomic scope" value="Eukaryota"/>
</dbReference>
<dbReference type="HOGENOM" id="CLU_049327_0_0_1"/>
<dbReference type="InParanoid" id="O13974"/>
<dbReference type="OMA" id="VDEYCAW"/>
<dbReference type="PhylomeDB" id="O13974"/>
<dbReference type="Reactome" id="R-SPO-5689896">
    <property type="pathway name" value="Ovarian tumor domain proteases"/>
</dbReference>
<dbReference type="PRO" id="PR:O13974"/>
<dbReference type="Proteomes" id="UP000002485">
    <property type="component" value="Chromosome I"/>
</dbReference>
<dbReference type="GO" id="GO:0005737">
    <property type="term" value="C:cytoplasm"/>
    <property type="evidence" value="ECO:0007005"/>
    <property type="project" value="PomBase"/>
</dbReference>
<dbReference type="GO" id="GO:0005829">
    <property type="term" value="C:cytosol"/>
    <property type="evidence" value="ECO:0007005"/>
    <property type="project" value="PomBase"/>
</dbReference>
<dbReference type="GO" id="GO:0005634">
    <property type="term" value="C:nucleus"/>
    <property type="evidence" value="ECO:0007005"/>
    <property type="project" value="PomBase"/>
</dbReference>
<dbReference type="GO" id="GO:0004843">
    <property type="term" value="F:cysteine-type deubiquitinase activity"/>
    <property type="evidence" value="ECO:0000318"/>
    <property type="project" value="GO_Central"/>
</dbReference>
<dbReference type="GO" id="GO:0008270">
    <property type="term" value="F:zinc ion binding"/>
    <property type="evidence" value="ECO:0007669"/>
    <property type="project" value="UniProtKB-KW"/>
</dbReference>
<dbReference type="GO" id="GO:0030968">
    <property type="term" value="P:endoplasmic reticulum unfolded protein response"/>
    <property type="evidence" value="ECO:0000318"/>
    <property type="project" value="GO_Central"/>
</dbReference>
<dbReference type="GO" id="GO:0036503">
    <property type="term" value="P:ERAD pathway"/>
    <property type="evidence" value="ECO:0000318"/>
    <property type="project" value="GO_Central"/>
</dbReference>
<dbReference type="GO" id="GO:0051321">
    <property type="term" value="P:meiotic cell cycle"/>
    <property type="evidence" value="ECO:0007669"/>
    <property type="project" value="UniProtKB-KW"/>
</dbReference>
<dbReference type="CDD" id="cd22745">
    <property type="entry name" value="OTU_OTU1"/>
    <property type="match status" value="1"/>
</dbReference>
<dbReference type="CDD" id="cd17059">
    <property type="entry name" value="Ubl_OTU1"/>
    <property type="match status" value="1"/>
</dbReference>
<dbReference type="FunFam" id="3.90.70.80:FF:000016">
    <property type="entry name" value="Putative ubiquitin thioesterase otu1"/>
    <property type="match status" value="1"/>
</dbReference>
<dbReference type="Gene3D" id="3.90.70.80">
    <property type="match status" value="1"/>
</dbReference>
<dbReference type="Gene3D" id="3.10.20.90">
    <property type="entry name" value="Phosphatidylinositol 3-kinase Catalytic Subunit, Chain A, domain 1"/>
    <property type="match status" value="1"/>
</dbReference>
<dbReference type="InterPro" id="IPR048857">
    <property type="entry name" value="OTU1_Ubl"/>
</dbReference>
<dbReference type="InterPro" id="IPR003323">
    <property type="entry name" value="OTU_dom"/>
</dbReference>
<dbReference type="InterPro" id="IPR038765">
    <property type="entry name" value="Papain-like_cys_pep_sf"/>
</dbReference>
<dbReference type="PANTHER" id="PTHR13312">
    <property type="entry name" value="HIV-INDUCED PROTEIN-7-LIKE PROTEASE"/>
    <property type="match status" value="1"/>
</dbReference>
<dbReference type="PANTHER" id="PTHR13312:SF0">
    <property type="entry name" value="UBIQUITIN THIOESTERASE OTU1"/>
    <property type="match status" value="1"/>
</dbReference>
<dbReference type="Pfam" id="PF02338">
    <property type="entry name" value="OTU"/>
    <property type="match status" value="1"/>
</dbReference>
<dbReference type="Pfam" id="PF21403">
    <property type="entry name" value="OTU1_UBXL"/>
    <property type="match status" value="1"/>
</dbReference>
<dbReference type="Pfam" id="PF24560">
    <property type="entry name" value="zf-C2H2_OTU1_C"/>
    <property type="match status" value="1"/>
</dbReference>
<dbReference type="SUPFAM" id="SSF54001">
    <property type="entry name" value="Cysteine proteinases"/>
    <property type="match status" value="1"/>
</dbReference>
<dbReference type="PROSITE" id="PS50802">
    <property type="entry name" value="OTU"/>
    <property type="match status" value="1"/>
</dbReference>
<dbReference type="PROSITE" id="PS00028">
    <property type="entry name" value="ZINC_FINGER_C2H2_1"/>
    <property type="match status" value="1"/>
</dbReference>
<name>OTU1_SCHPO</name>
<comment type="function">
    <text evidence="1 6">Hydrolase that can remove conjugated ubiquitin from proteins and may therefore play an important regulatory role at the level of protein turnover by preventing degradation (By similarity). Has a role in meiosis.</text>
</comment>
<comment type="catalytic activity">
    <reaction evidence="2">
        <text>Thiol-dependent hydrolysis of ester, thioester, amide, peptide and isopeptide bonds formed by the C-terminal Gly of ubiquitin (a 76-residue protein attached to proteins as an intracellular targeting signal).</text>
        <dbReference type="EC" id="3.4.19.12"/>
    </reaction>
</comment>
<comment type="subcellular location">
    <subcellularLocation>
        <location evidence="7">Cytoplasm</location>
    </subcellularLocation>
    <subcellularLocation>
        <location evidence="7">Nucleus</location>
    </subcellularLocation>
</comment>
<protein>
    <recommendedName>
        <fullName>Putative ubiquitin thioesterase otu1</fullName>
        <ecNumber evidence="2">3.4.19.12</ecNumber>
    </recommendedName>
    <alternativeName>
        <fullName>Meiotically up-regulated gene 141 protein</fullName>
    </alternativeName>
    <alternativeName>
        <fullName>OTU domain-containing protein 1</fullName>
    </alternativeName>
</protein>
<proteinExistence type="evidence at protein level"/>
<gene>
    <name type="primary">otu1</name>
    <name type="synonym">mug141</name>
    <name type="ORF">SPAC24C9.14</name>
</gene>
<keyword id="KW-0963">Cytoplasm</keyword>
<keyword id="KW-0378">Hydrolase</keyword>
<keyword id="KW-0469">Meiosis</keyword>
<keyword id="KW-0479">Metal-binding</keyword>
<keyword id="KW-0539">Nucleus</keyword>
<keyword id="KW-0645">Protease</keyword>
<keyword id="KW-1185">Reference proteome</keyword>
<keyword id="KW-0788">Thiol protease</keyword>
<keyword id="KW-0833">Ubl conjugation pathway</keyword>
<keyword id="KW-0862">Zinc</keyword>
<keyword id="KW-0863">Zinc-finger</keyword>
<evidence type="ECO:0000250" key="1"/>
<evidence type="ECO:0000250" key="2">
    <source>
        <dbReference type="UniProtKB" id="Q5VVQ6"/>
    </source>
</evidence>
<evidence type="ECO:0000250" key="3">
    <source>
        <dbReference type="UniProtKB" id="Q96FW1"/>
    </source>
</evidence>
<evidence type="ECO:0000255" key="4">
    <source>
        <dbReference type="PROSITE-ProRule" id="PRU00139"/>
    </source>
</evidence>
<evidence type="ECO:0000256" key="5">
    <source>
        <dbReference type="SAM" id="MobiDB-lite"/>
    </source>
</evidence>
<evidence type="ECO:0000269" key="6">
    <source>
    </source>
</evidence>
<evidence type="ECO:0000269" key="7">
    <source>
    </source>
</evidence>
<organism>
    <name type="scientific">Schizosaccharomyces pombe (strain 972 / ATCC 24843)</name>
    <name type="common">Fission yeast</name>
    <dbReference type="NCBI Taxonomy" id="284812"/>
    <lineage>
        <taxon>Eukaryota</taxon>
        <taxon>Fungi</taxon>
        <taxon>Dikarya</taxon>
        <taxon>Ascomycota</taxon>
        <taxon>Taphrinomycotina</taxon>
        <taxon>Schizosaccharomycetes</taxon>
        <taxon>Schizosaccharomycetales</taxon>
        <taxon>Schizosaccharomycetaceae</taxon>
        <taxon>Schizosaccharomyces</taxon>
    </lineage>
</organism>
<reference key="1">
    <citation type="journal article" date="2002" name="Nature">
        <title>The genome sequence of Schizosaccharomyces pombe.</title>
        <authorList>
            <person name="Wood V."/>
            <person name="Gwilliam R."/>
            <person name="Rajandream M.A."/>
            <person name="Lyne M.H."/>
            <person name="Lyne R."/>
            <person name="Stewart A."/>
            <person name="Sgouros J.G."/>
            <person name="Peat N."/>
            <person name="Hayles J."/>
            <person name="Baker S.G."/>
            <person name="Basham D."/>
            <person name="Bowman S."/>
            <person name="Brooks K."/>
            <person name="Brown D."/>
            <person name="Brown S."/>
            <person name="Chillingworth T."/>
            <person name="Churcher C.M."/>
            <person name="Collins M."/>
            <person name="Connor R."/>
            <person name="Cronin A."/>
            <person name="Davis P."/>
            <person name="Feltwell T."/>
            <person name="Fraser A."/>
            <person name="Gentles S."/>
            <person name="Goble A."/>
            <person name="Hamlin N."/>
            <person name="Harris D.E."/>
            <person name="Hidalgo J."/>
            <person name="Hodgson G."/>
            <person name="Holroyd S."/>
            <person name="Hornsby T."/>
            <person name="Howarth S."/>
            <person name="Huckle E.J."/>
            <person name="Hunt S."/>
            <person name="Jagels K."/>
            <person name="James K.D."/>
            <person name="Jones L."/>
            <person name="Jones M."/>
            <person name="Leather S."/>
            <person name="McDonald S."/>
            <person name="McLean J."/>
            <person name="Mooney P."/>
            <person name="Moule S."/>
            <person name="Mungall K.L."/>
            <person name="Murphy L.D."/>
            <person name="Niblett D."/>
            <person name="Odell C."/>
            <person name="Oliver K."/>
            <person name="O'Neil S."/>
            <person name="Pearson D."/>
            <person name="Quail M.A."/>
            <person name="Rabbinowitsch E."/>
            <person name="Rutherford K.M."/>
            <person name="Rutter S."/>
            <person name="Saunders D."/>
            <person name="Seeger K."/>
            <person name="Sharp S."/>
            <person name="Skelton J."/>
            <person name="Simmonds M.N."/>
            <person name="Squares R."/>
            <person name="Squares S."/>
            <person name="Stevens K."/>
            <person name="Taylor K."/>
            <person name="Taylor R.G."/>
            <person name="Tivey A."/>
            <person name="Walsh S.V."/>
            <person name="Warren T."/>
            <person name="Whitehead S."/>
            <person name="Woodward J.R."/>
            <person name="Volckaert G."/>
            <person name="Aert R."/>
            <person name="Robben J."/>
            <person name="Grymonprez B."/>
            <person name="Weltjens I."/>
            <person name="Vanstreels E."/>
            <person name="Rieger M."/>
            <person name="Schaefer M."/>
            <person name="Mueller-Auer S."/>
            <person name="Gabel C."/>
            <person name="Fuchs M."/>
            <person name="Duesterhoeft A."/>
            <person name="Fritzc C."/>
            <person name="Holzer E."/>
            <person name="Moestl D."/>
            <person name="Hilbert H."/>
            <person name="Borzym K."/>
            <person name="Langer I."/>
            <person name="Beck A."/>
            <person name="Lehrach H."/>
            <person name="Reinhardt R."/>
            <person name="Pohl T.M."/>
            <person name="Eger P."/>
            <person name="Zimmermann W."/>
            <person name="Wedler H."/>
            <person name="Wambutt R."/>
            <person name="Purnelle B."/>
            <person name="Goffeau A."/>
            <person name="Cadieu E."/>
            <person name="Dreano S."/>
            <person name="Gloux S."/>
            <person name="Lelaure V."/>
            <person name="Mottier S."/>
            <person name="Galibert F."/>
            <person name="Aves S.J."/>
            <person name="Xiang Z."/>
            <person name="Hunt C."/>
            <person name="Moore K."/>
            <person name="Hurst S.M."/>
            <person name="Lucas M."/>
            <person name="Rochet M."/>
            <person name="Gaillardin C."/>
            <person name="Tallada V.A."/>
            <person name="Garzon A."/>
            <person name="Thode G."/>
            <person name="Daga R.R."/>
            <person name="Cruzado L."/>
            <person name="Jimenez J."/>
            <person name="Sanchez M."/>
            <person name="del Rey F."/>
            <person name="Benito J."/>
            <person name="Dominguez A."/>
            <person name="Revuelta J.L."/>
            <person name="Moreno S."/>
            <person name="Armstrong J."/>
            <person name="Forsburg S.L."/>
            <person name="Cerutti L."/>
            <person name="Lowe T."/>
            <person name="McCombie W.R."/>
            <person name="Paulsen I."/>
            <person name="Potashkin J."/>
            <person name="Shpakovski G.V."/>
            <person name="Ussery D."/>
            <person name="Barrell B.G."/>
            <person name="Nurse P."/>
        </authorList>
    </citation>
    <scope>NUCLEOTIDE SEQUENCE [LARGE SCALE GENOMIC DNA]</scope>
    <source>
        <strain>972 / ATCC 24843</strain>
    </source>
</reference>
<reference key="2">
    <citation type="journal article" date="2005" name="Curr. Biol.">
        <title>A large-scale screen in S. pombe identifies seven novel genes required for critical meiotic events.</title>
        <authorList>
            <person name="Martin-Castellanos C."/>
            <person name="Blanco M."/>
            <person name="Rozalen A.E."/>
            <person name="Perez-Hidalgo L."/>
            <person name="Garcia A.I."/>
            <person name="Conde F."/>
            <person name="Mata J."/>
            <person name="Ellermeier C."/>
            <person name="Davis L."/>
            <person name="San-Segundo P."/>
            <person name="Smith G.R."/>
            <person name="Moreno S."/>
        </authorList>
    </citation>
    <scope>FUNCTION IN MEIOSIS</scope>
</reference>
<reference key="3">
    <citation type="journal article" date="2006" name="Nat. Biotechnol.">
        <title>ORFeome cloning and global analysis of protein localization in the fission yeast Schizosaccharomyces pombe.</title>
        <authorList>
            <person name="Matsuyama A."/>
            <person name="Arai R."/>
            <person name="Yashiroda Y."/>
            <person name="Shirai A."/>
            <person name="Kamata A."/>
            <person name="Sekido S."/>
            <person name="Kobayashi Y."/>
            <person name="Hashimoto A."/>
            <person name="Hamamoto M."/>
            <person name="Hiraoka Y."/>
            <person name="Horinouchi S."/>
            <person name="Yoshida M."/>
        </authorList>
    </citation>
    <scope>SUBCELLULAR LOCATION [LARGE SCALE ANALYSIS]</scope>
</reference>
<feature type="chain" id="PRO_0000300503" description="Putative ubiquitin thioesterase otu1">
    <location>
        <begin position="1"/>
        <end position="329"/>
    </location>
</feature>
<feature type="domain" description="OTU" evidence="4">
    <location>
        <begin position="135"/>
        <end position="254"/>
    </location>
</feature>
<feature type="zinc finger region" description="C2H2-type">
    <location>
        <begin position="299"/>
        <end position="323"/>
    </location>
</feature>
<feature type="region of interest" description="UBX-like" evidence="2">
    <location>
        <begin position="7"/>
        <end position="89"/>
    </location>
</feature>
<feature type="region of interest" description="Disordered" evidence="5">
    <location>
        <begin position="85"/>
        <end position="127"/>
    </location>
</feature>
<feature type="region of interest" description="Cys-loop" evidence="2">
    <location>
        <begin position="140"/>
        <end position="146"/>
    </location>
</feature>
<feature type="region of interest" description="Variable-loop" evidence="2">
    <location>
        <begin position="193"/>
        <end position="203"/>
    </location>
</feature>
<feature type="region of interest" description="His-loop" evidence="2">
    <location>
        <begin position="243"/>
        <end position="247"/>
    </location>
</feature>
<feature type="region of interest" description="S2 site" evidence="2">
    <location>
        <begin position="272"/>
        <end position="277"/>
    </location>
</feature>
<feature type="compositionally biased region" description="Polar residues" evidence="5">
    <location>
        <begin position="115"/>
        <end position="124"/>
    </location>
</feature>
<feature type="active site" evidence="3">
    <location>
        <position position="143"/>
    </location>
</feature>
<feature type="active site" description="Nucleophile" evidence="2">
    <location>
        <position position="146"/>
    </location>
</feature>
<feature type="active site" evidence="2">
    <location>
        <position position="247"/>
    </location>
</feature>
<feature type="active site" evidence="3">
    <location>
        <position position="323"/>
    </location>
</feature>
<feature type="binding site" evidence="2">
    <location>
        <position position="246"/>
    </location>
    <ligand>
        <name>substrate</name>
    </ligand>
</feature>